<gene>
    <name evidence="1" type="primary">uppP</name>
    <name type="ordered locus">Cphamn1_1869</name>
</gene>
<name>UPPP_CHLPB</name>
<proteinExistence type="inferred from homology"/>
<accession>B3ELU5</accession>
<dbReference type="EC" id="3.6.1.27" evidence="1"/>
<dbReference type="EMBL" id="CP001101">
    <property type="protein sequence ID" value="ACE04786.1"/>
    <property type="molecule type" value="Genomic_DNA"/>
</dbReference>
<dbReference type="SMR" id="B3ELU5"/>
<dbReference type="STRING" id="331678.Cphamn1_1869"/>
<dbReference type="KEGG" id="cpb:Cphamn1_1869"/>
<dbReference type="eggNOG" id="COG1968">
    <property type="taxonomic scope" value="Bacteria"/>
</dbReference>
<dbReference type="HOGENOM" id="CLU_060296_1_0_10"/>
<dbReference type="OrthoDB" id="9808289at2"/>
<dbReference type="GO" id="GO:0005886">
    <property type="term" value="C:plasma membrane"/>
    <property type="evidence" value="ECO:0007669"/>
    <property type="project" value="UniProtKB-SubCell"/>
</dbReference>
<dbReference type="GO" id="GO:0050380">
    <property type="term" value="F:undecaprenyl-diphosphatase activity"/>
    <property type="evidence" value="ECO:0007669"/>
    <property type="project" value="UniProtKB-UniRule"/>
</dbReference>
<dbReference type="GO" id="GO:0071555">
    <property type="term" value="P:cell wall organization"/>
    <property type="evidence" value="ECO:0007669"/>
    <property type="project" value="UniProtKB-KW"/>
</dbReference>
<dbReference type="GO" id="GO:0009252">
    <property type="term" value="P:peptidoglycan biosynthetic process"/>
    <property type="evidence" value="ECO:0007669"/>
    <property type="project" value="UniProtKB-KW"/>
</dbReference>
<dbReference type="GO" id="GO:0008360">
    <property type="term" value="P:regulation of cell shape"/>
    <property type="evidence" value="ECO:0007669"/>
    <property type="project" value="UniProtKB-KW"/>
</dbReference>
<dbReference type="GO" id="GO:0046677">
    <property type="term" value="P:response to antibiotic"/>
    <property type="evidence" value="ECO:0007669"/>
    <property type="project" value="UniProtKB-UniRule"/>
</dbReference>
<dbReference type="HAMAP" id="MF_01006">
    <property type="entry name" value="Undec_diphosphatase"/>
    <property type="match status" value="1"/>
</dbReference>
<dbReference type="InterPro" id="IPR003824">
    <property type="entry name" value="UppP"/>
</dbReference>
<dbReference type="NCBIfam" id="TIGR00753">
    <property type="entry name" value="undec_PP_bacA"/>
    <property type="match status" value="1"/>
</dbReference>
<dbReference type="PANTHER" id="PTHR30622">
    <property type="entry name" value="UNDECAPRENYL-DIPHOSPHATASE"/>
    <property type="match status" value="1"/>
</dbReference>
<dbReference type="PANTHER" id="PTHR30622:SF4">
    <property type="entry name" value="UNDECAPRENYL-DIPHOSPHATASE"/>
    <property type="match status" value="1"/>
</dbReference>
<dbReference type="Pfam" id="PF02673">
    <property type="entry name" value="BacA"/>
    <property type="match status" value="1"/>
</dbReference>
<keyword id="KW-0046">Antibiotic resistance</keyword>
<keyword id="KW-0997">Cell inner membrane</keyword>
<keyword id="KW-1003">Cell membrane</keyword>
<keyword id="KW-0133">Cell shape</keyword>
<keyword id="KW-0961">Cell wall biogenesis/degradation</keyword>
<keyword id="KW-0378">Hydrolase</keyword>
<keyword id="KW-0472">Membrane</keyword>
<keyword id="KW-0573">Peptidoglycan synthesis</keyword>
<keyword id="KW-0812">Transmembrane</keyword>
<keyword id="KW-1133">Transmembrane helix</keyword>
<feature type="chain" id="PRO_1000197358" description="Undecaprenyl-diphosphatase">
    <location>
        <begin position="1"/>
        <end position="282"/>
    </location>
</feature>
<feature type="transmembrane region" description="Helical" evidence="1">
    <location>
        <begin position="40"/>
        <end position="60"/>
    </location>
</feature>
<feature type="transmembrane region" description="Helical" evidence="1">
    <location>
        <begin position="87"/>
        <end position="107"/>
    </location>
</feature>
<feature type="transmembrane region" description="Helical" evidence="1">
    <location>
        <begin position="116"/>
        <end position="136"/>
    </location>
</feature>
<feature type="transmembrane region" description="Helical" evidence="1">
    <location>
        <begin position="153"/>
        <end position="173"/>
    </location>
</feature>
<feature type="transmembrane region" description="Helical" evidence="1">
    <location>
        <begin position="196"/>
        <end position="216"/>
    </location>
</feature>
<feature type="transmembrane region" description="Helical" evidence="1">
    <location>
        <begin position="229"/>
        <end position="249"/>
    </location>
</feature>
<feature type="transmembrane region" description="Helical" evidence="1">
    <location>
        <begin position="256"/>
        <end position="276"/>
    </location>
</feature>
<reference key="1">
    <citation type="submission" date="2008-06" db="EMBL/GenBank/DDBJ databases">
        <title>Complete sequence of Chlorobium phaeobacteroides BS1.</title>
        <authorList>
            <consortium name="US DOE Joint Genome Institute"/>
            <person name="Lucas S."/>
            <person name="Copeland A."/>
            <person name="Lapidus A."/>
            <person name="Glavina del Rio T."/>
            <person name="Dalin E."/>
            <person name="Tice H."/>
            <person name="Bruce D."/>
            <person name="Goodwin L."/>
            <person name="Pitluck S."/>
            <person name="Schmutz J."/>
            <person name="Larimer F."/>
            <person name="Land M."/>
            <person name="Hauser L."/>
            <person name="Kyrpides N."/>
            <person name="Ovchinnikova G."/>
            <person name="Li T."/>
            <person name="Liu Z."/>
            <person name="Zhao F."/>
            <person name="Overmann J."/>
            <person name="Bryant D.A."/>
            <person name="Richardson P."/>
        </authorList>
    </citation>
    <scope>NUCLEOTIDE SEQUENCE [LARGE SCALE GENOMIC DNA]</scope>
    <source>
        <strain>BS1</strain>
    </source>
</reference>
<protein>
    <recommendedName>
        <fullName evidence="1">Undecaprenyl-diphosphatase</fullName>
        <ecNumber evidence="1">3.6.1.27</ecNumber>
    </recommendedName>
    <alternativeName>
        <fullName evidence="1">Bacitracin resistance protein</fullName>
    </alternativeName>
    <alternativeName>
        <fullName evidence="1">Undecaprenyl pyrophosphate phosphatase</fullName>
    </alternativeName>
</protein>
<evidence type="ECO:0000255" key="1">
    <source>
        <dbReference type="HAMAP-Rule" id="MF_01006"/>
    </source>
</evidence>
<comment type="function">
    <text evidence="1">Catalyzes the dephosphorylation of undecaprenyl diphosphate (UPP). Confers resistance to bacitracin.</text>
</comment>
<comment type="catalytic activity">
    <reaction evidence="1">
        <text>di-trans,octa-cis-undecaprenyl diphosphate + H2O = di-trans,octa-cis-undecaprenyl phosphate + phosphate + H(+)</text>
        <dbReference type="Rhea" id="RHEA:28094"/>
        <dbReference type="ChEBI" id="CHEBI:15377"/>
        <dbReference type="ChEBI" id="CHEBI:15378"/>
        <dbReference type="ChEBI" id="CHEBI:43474"/>
        <dbReference type="ChEBI" id="CHEBI:58405"/>
        <dbReference type="ChEBI" id="CHEBI:60392"/>
        <dbReference type="EC" id="3.6.1.27"/>
    </reaction>
</comment>
<comment type="subcellular location">
    <subcellularLocation>
        <location evidence="1">Cell inner membrane</location>
        <topology evidence="1">Multi-pass membrane protein</topology>
    </subcellularLocation>
</comment>
<comment type="miscellaneous">
    <text>Bacitracin is thought to be involved in the inhibition of peptidoglycan synthesis by sequestering undecaprenyl diphosphate, thereby reducing the pool of lipid carrier available.</text>
</comment>
<comment type="similarity">
    <text evidence="1">Belongs to the UppP family.</text>
</comment>
<sequence>MTLFEAIILGIVQGLTEFLPISSTAHLRIVPALAGWQDPGAAFSAIVQIGTLAAVLIYFYKDIHSITRGVFDGLRSGRPFETQESRMGWMIAAGTMPIVILGLLFKTEIETSLRSLYWISVALIVLALMLTLAEWLMKRRADKGLKAKTMNDIGWKEALLIGLAQSIALIPGSSRSGVTITGGLFLNLSRETAARFSFLLSLPAVFAAGIYQLYETRDQLMASGSDLLNLAVATLFAGIVGYASIAFLINYLKQHSTALFILYRIALGVGILGLIANGYLQA</sequence>
<organism>
    <name type="scientific">Chlorobium phaeobacteroides (strain BS1)</name>
    <dbReference type="NCBI Taxonomy" id="331678"/>
    <lineage>
        <taxon>Bacteria</taxon>
        <taxon>Pseudomonadati</taxon>
        <taxon>Chlorobiota</taxon>
        <taxon>Chlorobiia</taxon>
        <taxon>Chlorobiales</taxon>
        <taxon>Chlorobiaceae</taxon>
        <taxon>Chlorobium/Pelodictyon group</taxon>
        <taxon>Chlorobium</taxon>
    </lineage>
</organism>